<organism>
    <name type="scientific">Drosophila melanogaster</name>
    <name type="common">Fruit fly</name>
    <dbReference type="NCBI Taxonomy" id="7227"/>
    <lineage>
        <taxon>Eukaryota</taxon>
        <taxon>Metazoa</taxon>
        <taxon>Ecdysozoa</taxon>
        <taxon>Arthropoda</taxon>
        <taxon>Hexapoda</taxon>
        <taxon>Insecta</taxon>
        <taxon>Pterygota</taxon>
        <taxon>Neoptera</taxon>
        <taxon>Endopterygota</taxon>
        <taxon>Diptera</taxon>
        <taxon>Brachycera</taxon>
        <taxon>Muscomorpha</taxon>
        <taxon>Ephydroidea</taxon>
        <taxon>Drosophilidae</taxon>
        <taxon>Drosophila</taxon>
        <taxon>Sophophora</taxon>
    </lineage>
</organism>
<feature type="chain" id="PRO_0000200264" description="Homeotic protein Sex combs reduced">
    <location>
        <begin position="1"/>
        <end position="417"/>
    </location>
</feature>
<feature type="DNA-binding region" description="Homeobox" evidence="1">
    <location>
        <begin position="324"/>
        <end position="383"/>
    </location>
</feature>
<feature type="region of interest" description="Disordered" evidence="2">
    <location>
        <begin position="24"/>
        <end position="67"/>
    </location>
</feature>
<feature type="region of interest" description="Disordered" evidence="2">
    <location>
        <begin position="169"/>
        <end position="220"/>
    </location>
</feature>
<feature type="region of interest" description="Disordered" evidence="2">
    <location>
        <begin position="256"/>
        <end position="304"/>
    </location>
</feature>
<feature type="short sequence motif" description="Antp-type hexapeptide">
    <location>
        <begin position="303"/>
        <end position="308"/>
    </location>
</feature>
<feature type="compositionally biased region" description="Gly residues" evidence="2">
    <location>
        <begin position="38"/>
        <end position="64"/>
    </location>
</feature>
<feature type="compositionally biased region" description="Low complexity" evidence="2">
    <location>
        <begin position="186"/>
        <end position="203"/>
    </location>
</feature>
<feature type="modified residue" description="Phosphoserine" evidence="5">
    <location>
        <position position="216"/>
    </location>
</feature>
<feature type="sequence conflict" description="In Ref. 7; AAA19240." evidence="6" ref="7">
    <original>Q</original>
    <variation>L</variation>
    <location>
        <position position="118"/>
    </location>
</feature>
<feature type="sequence conflict" description="In Ref. 7; AAA19240." evidence="6" ref="7">
    <original>HAH</original>
    <variation>LAL</variation>
    <location>
        <begin position="133"/>
        <end position="135"/>
    </location>
</feature>
<feature type="sequence conflict" description="In Ref. 7; AAA19240." evidence="6" ref="7">
    <original>A</original>
    <variation>R</variation>
    <location>
        <position position="141"/>
    </location>
</feature>
<feature type="sequence conflict" description="In Ref. 3; CAA54348." evidence="6" ref="3">
    <original>G</original>
    <variation>R</variation>
    <location>
        <position position="258"/>
    </location>
</feature>
<feature type="sequence conflict" description="In Ref. 8; CAA28857." evidence="6" ref="8">
    <original>TVNANGE</original>
    <variation>YCESNGQ</variation>
    <location>
        <begin position="317"/>
        <end position="323"/>
    </location>
</feature>
<feature type="sequence conflict" description="In Ref. 7; AAA19240." evidence="6" ref="7">
    <original>N</original>
    <variation>D</variation>
    <location>
        <position position="374"/>
    </location>
</feature>
<feature type="sequence conflict" description="In Ref. 8; CAA28857." evidence="6" ref="8">
    <original>W</original>
    <variation>L</variation>
    <location>
        <position position="379"/>
    </location>
</feature>
<feature type="sequence conflict" description="In Ref. 7; AAA19240." evidence="6" ref="7">
    <original>Y</original>
    <variation>C</variation>
    <location>
        <position position="393"/>
    </location>
</feature>
<feature type="sequence conflict" description="In Ref. 7; AAA19240." evidence="6" ref="7">
    <original>Y</original>
    <variation>C</variation>
    <location>
        <position position="402"/>
    </location>
</feature>
<feature type="helix" evidence="7">
    <location>
        <begin position="306"/>
        <end position="308"/>
    </location>
</feature>
<feature type="helix" evidence="7">
    <location>
        <begin position="333"/>
        <end position="343"/>
    </location>
</feature>
<feature type="helix" evidence="7">
    <location>
        <begin position="351"/>
        <end position="360"/>
    </location>
</feature>
<feature type="helix" evidence="7">
    <location>
        <begin position="365"/>
        <end position="380"/>
    </location>
</feature>
<gene>
    <name type="primary">Scr</name>
    <name type="ORF">CG1030</name>
</gene>
<name>SCR_DROME</name>
<accession>P09077</accession>
<accession>Q23990</accession>
<accession>Q24508</accession>
<accession>Q9V3Q3</accession>
<reference key="1">
    <citation type="journal article" date="1989" name="EMBO J.">
        <title>The homeotic gene Sex Combs Reduced of Drosophila: gene structure and embryonic expression.</title>
        <authorList>
            <person name="Lemotte P.K."/>
            <person name="Kuroiwa A."/>
            <person name="Fessler L.I."/>
            <person name="Gehring W.J."/>
        </authorList>
    </citation>
    <scope>NUCLEOTIDE SEQUENCE [GENOMIC DNA]</scope>
</reference>
<reference key="2">
    <citation type="submission" date="1993-03" db="EMBL/GenBank/DDBJ databases">
        <authorList>
            <person name="Baumgartner P."/>
        </authorList>
    </citation>
    <scope>SEQUENCE REVISION</scope>
</reference>
<reference key="3">
    <citation type="journal article" date="1995" name="Gene">
        <title>The sex combs reduced gene of Drosophila melanogaster has multiple transcripts.</title>
        <authorList>
            <person name="Andrew D.J."/>
        </authorList>
    </citation>
    <scope>NUCLEOTIDE SEQUENCE [GENOMIC DNA]</scope>
</reference>
<reference key="4">
    <citation type="submission" date="1999-01" db="EMBL/GenBank/DDBJ databases">
        <title>Complete sequence of the Antennapedia complex of Drosophila.</title>
        <authorList>
            <person name="Celniker S.E."/>
            <person name="Pfeiffer B.D."/>
            <person name="Knafels J."/>
            <person name="Martin C.H."/>
            <person name="Mayeda C.A."/>
            <person name="Palazzolo M.J."/>
        </authorList>
    </citation>
    <scope>NUCLEOTIDE SEQUENCE [GENOMIC DNA]</scope>
    <source>
        <strain>Berkeley</strain>
    </source>
</reference>
<reference key="5">
    <citation type="journal article" date="2000" name="Science">
        <title>The genome sequence of Drosophila melanogaster.</title>
        <authorList>
            <person name="Adams M.D."/>
            <person name="Celniker S.E."/>
            <person name="Holt R.A."/>
            <person name="Evans C.A."/>
            <person name="Gocayne J.D."/>
            <person name="Amanatides P.G."/>
            <person name="Scherer S.E."/>
            <person name="Li P.W."/>
            <person name="Hoskins R.A."/>
            <person name="Galle R.F."/>
            <person name="George R.A."/>
            <person name="Lewis S.E."/>
            <person name="Richards S."/>
            <person name="Ashburner M."/>
            <person name="Henderson S.N."/>
            <person name="Sutton G.G."/>
            <person name="Wortman J.R."/>
            <person name="Yandell M.D."/>
            <person name="Zhang Q."/>
            <person name="Chen L.X."/>
            <person name="Brandon R.C."/>
            <person name="Rogers Y.-H.C."/>
            <person name="Blazej R.G."/>
            <person name="Champe M."/>
            <person name="Pfeiffer B.D."/>
            <person name="Wan K.H."/>
            <person name="Doyle C."/>
            <person name="Baxter E.G."/>
            <person name="Helt G."/>
            <person name="Nelson C.R."/>
            <person name="Miklos G.L.G."/>
            <person name="Abril J.F."/>
            <person name="Agbayani A."/>
            <person name="An H.-J."/>
            <person name="Andrews-Pfannkoch C."/>
            <person name="Baldwin D."/>
            <person name="Ballew R.M."/>
            <person name="Basu A."/>
            <person name="Baxendale J."/>
            <person name="Bayraktaroglu L."/>
            <person name="Beasley E.M."/>
            <person name="Beeson K.Y."/>
            <person name="Benos P.V."/>
            <person name="Berman B.P."/>
            <person name="Bhandari D."/>
            <person name="Bolshakov S."/>
            <person name="Borkova D."/>
            <person name="Botchan M.R."/>
            <person name="Bouck J."/>
            <person name="Brokstein P."/>
            <person name="Brottier P."/>
            <person name="Burtis K.C."/>
            <person name="Busam D.A."/>
            <person name="Butler H."/>
            <person name="Cadieu E."/>
            <person name="Center A."/>
            <person name="Chandra I."/>
            <person name="Cherry J.M."/>
            <person name="Cawley S."/>
            <person name="Dahlke C."/>
            <person name="Davenport L.B."/>
            <person name="Davies P."/>
            <person name="de Pablos B."/>
            <person name="Delcher A."/>
            <person name="Deng Z."/>
            <person name="Mays A.D."/>
            <person name="Dew I."/>
            <person name="Dietz S.M."/>
            <person name="Dodson K."/>
            <person name="Doup L.E."/>
            <person name="Downes M."/>
            <person name="Dugan-Rocha S."/>
            <person name="Dunkov B.C."/>
            <person name="Dunn P."/>
            <person name="Durbin K.J."/>
            <person name="Evangelista C.C."/>
            <person name="Ferraz C."/>
            <person name="Ferriera S."/>
            <person name="Fleischmann W."/>
            <person name="Fosler C."/>
            <person name="Gabrielian A.E."/>
            <person name="Garg N.S."/>
            <person name="Gelbart W.M."/>
            <person name="Glasser K."/>
            <person name="Glodek A."/>
            <person name="Gong F."/>
            <person name="Gorrell J.H."/>
            <person name="Gu Z."/>
            <person name="Guan P."/>
            <person name="Harris M."/>
            <person name="Harris N.L."/>
            <person name="Harvey D.A."/>
            <person name="Heiman T.J."/>
            <person name="Hernandez J.R."/>
            <person name="Houck J."/>
            <person name="Hostin D."/>
            <person name="Houston K.A."/>
            <person name="Howland T.J."/>
            <person name="Wei M.-H."/>
            <person name="Ibegwam C."/>
            <person name="Jalali M."/>
            <person name="Kalush F."/>
            <person name="Karpen G.H."/>
            <person name="Ke Z."/>
            <person name="Kennison J.A."/>
            <person name="Ketchum K.A."/>
            <person name="Kimmel B.E."/>
            <person name="Kodira C.D."/>
            <person name="Kraft C.L."/>
            <person name="Kravitz S."/>
            <person name="Kulp D."/>
            <person name="Lai Z."/>
            <person name="Lasko P."/>
            <person name="Lei Y."/>
            <person name="Levitsky A.A."/>
            <person name="Li J.H."/>
            <person name="Li Z."/>
            <person name="Liang Y."/>
            <person name="Lin X."/>
            <person name="Liu X."/>
            <person name="Mattei B."/>
            <person name="McIntosh T.C."/>
            <person name="McLeod M.P."/>
            <person name="McPherson D."/>
            <person name="Merkulov G."/>
            <person name="Milshina N.V."/>
            <person name="Mobarry C."/>
            <person name="Morris J."/>
            <person name="Moshrefi A."/>
            <person name="Mount S.M."/>
            <person name="Moy M."/>
            <person name="Murphy B."/>
            <person name="Murphy L."/>
            <person name="Muzny D.M."/>
            <person name="Nelson D.L."/>
            <person name="Nelson D.R."/>
            <person name="Nelson K.A."/>
            <person name="Nixon K."/>
            <person name="Nusskern D.R."/>
            <person name="Pacleb J.M."/>
            <person name="Palazzolo M."/>
            <person name="Pittman G.S."/>
            <person name="Pan S."/>
            <person name="Pollard J."/>
            <person name="Puri V."/>
            <person name="Reese M.G."/>
            <person name="Reinert K."/>
            <person name="Remington K."/>
            <person name="Saunders R.D.C."/>
            <person name="Scheeler F."/>
            <person name="Shen H."/>
            <person name="Shue B.C."/>
            <person name="Siden-Kiamos I."/>
            <person name="Simpson M."/>
            <person name="Skupski M.P."/>
            <person name="Smith T.J."/>
            <person name="Spier E."/>
            <person name="Spradling A.C."/>
            <person name="Stapleton M."/>
            <person name="Strong R."/>
            <person name="Sun E."/>
            <person name="Svirskas R."/>
            <person name="Tector C."/>
            <person name="Turner R."/>
            <person name="Venter E."/>
            <person name="Wang A.H."/>
            <person name="Wang X."/>
            <person name="Wang Z.-Y."/>
            <person name="Wassarman D.A."/>
            <person name="Weinstock G.M."/>
            <person name="Weissenbach J."/>
            <person name="Williams S.M."/>
            <person name="Woodage T."/>
            <person name="Worley K.C."/>
            <person name="Wu D."/>
            <person name="Yang S."/>
            <person name="Yao Q.A."/>
            <person name="Ye J."/>
            <person name="Yeh R.-F."/>
            <person name="Zaveri J.S."/>
            <person name="Zhan M."/>
            <person name="Zhang G."/>
            <person name="Zhao Q."/>
            <person name="Zheng L."/>
            <person name="Zheng X.H."/>
            <person name="Zhong F.N."/>
            <person name="Zhong W."/>
            <person name="Zhou X."/>
            <person name="Zhu S.C."/>
            <person name="Zhu X."/>
            <person name="Smith H.O."/>
            <person name="Gibbs R.A."/>
            <person name="Myers E.W."/>
            <person name="Rubin G.M."/>
            <person name="Venter J.C."/>
        </authorList>
    </citation>
    <scope>NUCLEOTIDE SEQUENCE [LARGE SCALE GENOMIC DNA]</scope>
    <source>
        <strain>Berkeley</strain>
    </source>
</reference>
<reference key="6">
    <citation type="journal article" date="2002" name="Genome Biol.">
        <title>Annotation of the Drosophila melanogaster euchromatic genome: a systematic review.</title>
        <authorList>
            <person name="Misra S."/>
            <person name="Crosby M.A."/>
            <person name="Mungall C.J."/>
            <person name="Matthews B.B."/>
            <person name="Campbell K.S."/>
            <person name="Hradecky P."/>
            <person name="Huang Y."/>
            <person name="Kaminker J.S."/>
            <person name="Millburn G.H."/>
            <person name="Prochnik S.E."/>
            <person name="Smith C.D."/>
            <person name="Tupy J.L."/>
            <person name="Whitfield E.J."/>
            <person name="Bayraktaroglu L."/>
            <person name="Berman B.P."/>
            <person name="Bettencourt B.R."/>
            <person name="Celniker S.E."/>
            <person name="de Grey A.D.N.J."/>
            <person name="Drysdale R.A."/>
            <person name="Harris N.L."/>
            <person name="Richter J."/>
            <person name="Russo S."/>
            <person name="Schroeder A.J."/>
            <person name="Shu S.Q."/>
            <person name="Stapleton M."/>
            <person name="Yamada C."/>
            <person name="Ashburner M."/>
            <person name="Gelbart W.M."/>
            <person name="Rubin G.M."/>
            <person name="Lewis S.E."/>
        </authorList>
    </citation>
    <scope>GENOME REANNOTATION</scope>
    <source>
        <strain>Berkeley</strain>
    </source>
</reference>
<reference key="7">
    <citation type="submission" date="1994-06" db="EMBL/GenBank/DDBJ databases">
        <title>Sequence of cDNA of homeodomain protein from sex combs reduced (Scr) gene.</title>
        <authorList>
            <person name="Kaufman T.C."/>
        </authorList>
    </citation>
    <scope>NUCLEOTIDE SEQUENCE [MRNA]</scope>
</reference>
<reference key="8">
    <citation type="journal article" date="1985" name="EMBO J.">
        <title>Cloning of the homeotic Sex Combs Reduced gene in Drosophila and in situ localization of its transcripts.</title>
        <authorList>
            <person name="Kuroiwa A."/>
            <person name="Kloter U."/>
            <person name="Baumgartner P."/>
            <person name="Gehring W.J."/>
        </authorList>
    </citation>
    <scope>NUCLEOTIDE SEQUENCE [GENOMIC DNA] OF 317-390</scope>
</reference>
<reference key="9">
    <citation type="journal article" date="1991" name="Genetics">
        <title>A functional and structural analysis of the Sex combs reduced locus of Drosophila melanogaster.</title>
        <authorList>
            <person name="Pattatucci A.M."/>
            <person name="Otteson D.C."/>
            <person name="Kaufman T.C."/>
        </authorList>
    </citation>
    <scope>FUNCTION</scope>
</reference>
<reference key="10">
    <citation type="journal article" date="2002" name="Evol. Dev.">
        <title>Hox genes and the evolution of the arthropod body plan.</title>
        <authorList>
            <person name="Hughes C.L."/>
            <person name="Kaufman T.C."/>
        </authorList>
    </citation>
    <scope>REVIEW ON FUNCTION</scope>
    <scope>TISSUE SPECIFICITY</scope>
</reference>
<reference key="11">
    <citation type="journal article" date="2008" name="J. Proteome Res.">
        <title>Phosphoproteome analysis of Drosophila melanogaster embryos.</title>
        <authorList>
            <person name="Zhai B."/>
            <person name="Villen J."/>
            <person name="Beausoleil S.A."/>
            <person name="Mintseris J."/>
            <person name="Gygi S.P."/>
        </authorList>
    </citation>
    <scope>PHOSPHORYLATION [LARGE SCALE ANALYSIS] AT SER-216</scope>
    <scope>IDENTIFICATION BY MASS SPECTROMETRY</scope>
    <source>
        <tissue>Embryo</tissue>
    </source>
</reference>
<dbReference type="EMBL" id="X14475">
    <property type="protein sequence ID" value="CAA32637.1"/>
    <property type="status" value="ALT_FRAME"/>
    <property type="molecule type" value="Genomic_DNA"/>
</dbReference>
<dbReference type="EMBL" id="X77075">
    <property type="protein sequence ID" value="CAA54348.1"/>
    <property type="molecule type" value="Genomic_DNA"/>
</dbReference>
<dbReference type="EMBL" id="X77076">
    <property type="protein sequence ID" value="CAA54348.1"/>
    <property type="status" value="JOINED"/>
    <property type="molecule type" value="Genomic_DNA"/>
</dbReference>
<dbReference type="EMBL" id="AE001572">
    <property type="protein sequence ID" value="AAD19795.1"/>
    <property type="molecule type" value="Genomic_DNA"/>
</dbReference>
<dbReference type="EMBL" id="AE014297">
    <property type="protein sequence ID" value="AAF54082.1"/>
    <property type="molecule type" value="Genomic_DNA"/>
</dbReference>
<dbReference type="EMBL" id="U10506">
    <property type="protein sequence ID" value="AAA19240.1"/>
    <property type="status" value="ALT_FRAME"/>
    <property type="molecule type" value="mRNA"/>
</dbReference>
<dbReference type="EMBL" id="X05228">
    <property type="protein sequence ID" value="CAA28857.1"/>
    <property type="molecule type" value="Genomic_DNA"/>
</dbReference>
<dbReference type="PIR" id="S03631">
    <property type="entry name" value="S03631"/>
</dbReference>
<dbReference type="RefSeq" id="NP_524248.2">
    <property type="nucleotide sequence ID" value="NM_079524.4"/>
</dbReference>
<dbReference type="RefSeq" id="NP_996165.1">
    <property type="nucleotide sequence ID" value="NM_206443.3"/>
</dbReference>
<dbReference type="PDB" id="2R5Y">
    <property type="method" value="X-ray"/>
    <property type="resolution" value="2.60 A"/>
    <property type="chains" value="A=298-384"/>
</dbReference>
<dbReference type="PDB" id="2R5Z">
    <property type="method" value="X-ray"/>
    <property type="resolution" value="2.60 A"/>
    <property type="chains" value="A=298-384"/>
</dbReference>
<dbReference type="PDBsum" id="2R5Y"/>
<dbReference type="PDBsum" id="2R5Z"/>
<dbReference type="SMR" id="P09077"/>
<dbReference type="BioGRID" id="66031">
    <property type="interactions" value="43"/>
</dbReference>
<dbReference type="DIP" id="DIP-40017N"/>
<dbReference type="FunCoup" id="P09077">
    <property type="interactions" value="302"/>
</dbReference>
<dbReference type="IntAct" id="P09077">
    <property type="interactions" value="1"/>
</dbReference>
<dbReference type="STRING" id="7227.FBpp0423170"/>
<dbReference type="GlyGen" id="P09077">
    <property type="glycosylation" value="2 sites"/>
</dbReference>
<dbReference type="iPTMnet" id="P09077"/>
<dbReference type="PaxDb" id="7227-FBpp0089393"/>
<dbReference type="DNASU" id="40833"/>
<dbReference type="EnsemblMetazoa" id="FBtr0081657">
    <property type="protein sequence ID" value="FBpp0081163"/>
    <property type="gene ID" value="FBgn0003339"/>
</dbReference>
<dbReference type="EnsemblMetazoa" id="FBtr0081658">
    <property type="protein sequence ID" value="FBpp0089393"/>
    <property type="gene ID" value="FBgn0003339"/>
</dbReference>
<dbReference type="GeneID" id="40833"/>
<dbReference type="KEGG" id="dme:Dmel_CG1030"/>
<dbReference type="AGR" id="FB:FBgn0003339"/>
<dbReference type="CTD" id="109559"/>
<dbReference type="FlyBase" id="FBgn0003339">
    <property type="gene designation" value="Scr"/>
</dbReference>
<dbReference type="VEuPathDB" id="VectorBase:FBgn0003339"/>
<dbReference type="eggNOG" id="KOG0489">
    <property type="taxonomic scope" value="Eukaryota"/>
</dbReference>
<dbReference type="GeneTree" id="ENSGT00940000171134"/>
<dbReference type="HOGENOM" id="CLU_034137_0_0_1"/>
<dbReference type="InParanoid" id="P09077"/>
<dbReference type="OMA" id="SSCKYAD"/>
<dbReference type="OrthoDB" id="6159439at2759"/>
<dbReference type="PhylomeDB" id="P09077"/>
<dbReference type="SignaLink" id="P09077"/>
<dbReference type="BioGRID-ORCS" id="40833">
    <property type="hits" value="0 hits in 3 CRISPR screens"/>
</dbReference>
<dbReference type="CD-CODE" id="58FDC23F">
    <property type="entry name" value="PcG body"/>
</dbReference>
<dbReference type="ChiTaRS" id="Scr">
    <property type="organism name" value="fly"/>
</dbReference>
<dbReference type="EvolutionaryTrace" id="P09077"/>
<dbReference type="GenomeRNAi" id="40833"/>
<dbReference type="PRO" id="PR:P09077"/>
<dbReference type="Proteomes" id="UP000000803">
    <property type="component" value="Chromosome 3R"/>
</dbReference>
<dbReference type="Bgee" id="FBgn0003339">
    <property type="expression patterns" value="Expressed in tormogen cell in proboscis and 49 other cell types or tissues"/>
</dbReference>
<dbReference type="ExpressionAtlas" id="P09077">
    <property type="expression patterns" value="baseline and differential"/>
</dbReference>
<dbReference type="GO" id="GO:0005654">
    <property type="term" value="C:nucleoplasm"/>
    <property type="evidence" value="ECO:0000318"/>
    <property type="project" value="GO_Central"/>
</dbReference>
<dbReference type="GO" id="GO:0005634">
    <property type="term" value="C:nucleus"/>
    <property type="evidence" value="ECO:0000314"/>
    <property type="project" value="FlyBase"/>
</dbReference>
<dbReference type="GO" id="GO:0000981">
    <property type="term" value="F:DNA-binding transcription factor activity, RNA polymerase II-specific"/>
    <property type="evidence" value="ECO:0000318"/>
    <property type="project" value="GO_Central"/>
</dbReference>
<dbReference type="GO" id="GO:0042803">
    <property type="term" value="F:protein homodimerization activity"/>
    <property type="evidence" value="ECO:0000314"/>
    <property type="project" value="FlyBase"/>
</dbReference>
<dbReference type="GO" id="GO:0000978">
    <property type="term" value="F:RNA polymerase II cis-regulatory region sequence-specific DNA binding"/>
    <property type="evidence" value="ECO:0000318"/>
    <property type="project" value="GO_Central"/>
</dbReference>
<dbReference type="GO" id="GO:0000977">
    <property type="term" value="F:RNA polymerase II transcription regulatory region sequence-specific DNA binding"/>
    <property type="evidence" value="ECO:0000314"/>
    <property type="project" value="FlyBase"/>
</dbReference>
<dbReference type="GO" id="GO:0043565">
    <property type="term" value="F:sequence-specific DNA binding"/>
    <property type="evidence" value="ECO:0000314"/>
    <property type="project" value="FlyBase"/>
</dbReference>
<dbReference type="GO" id="GO:0009952">
    <property type="term" value="P:anterior/posterior pattern specification"/>
    <property type="evidence" value="ECO:0000318"/>
    <property type="project" value="GO_Central"/>
</dbReference>
<dbReference type="GO" id="GO:0007494">
    <property type="term" value="P:midgut development"/>
    <property type="evidence" value="ECO:0000304"/>
    <property type="project" value="FlyBase"/>
</dbReference>
<dbReference type="GO" id="GO:0045944">
    <property type="term" value="P:positive regulation of transcription by RNA polymerase II"/>
    <property type="evidence" value="ECO:0000314"/>
    <property type="project" value="FlyBase"/>
</dbReference>
<dbReference type="GO" id="GO:0007432">
    <property type="term" value="P:salivary gland boundary specification"/>
    <property type="evidence" value="ECO:0000304"/>
    <property type="project" value="FlyBase"/>
</dbReference>
<dbReference type="GO" id="GO:0045498">
    <property type="term" value="P:sex comb development"/>
    <property type="evidence" value="ECO:0000315"/>
    <property type="project" value="FlyBase"/>
</dbReference>
<dbReference type="CDD" id="cd00086">
    <property type="entry name" value="homeodomain"/>
    <property type="match status" value="1"/>
</dbReference>
<dbReference type="DisProt" id="DP02556"/>
<dbReference type="FunFam" id="1.10.10.60:FF:000288">
    <property type="entry name" value="Sex combs reduced"/>
    <property type="match status" value="1"/>
</dbReference>
<dbReference type="Gene3D" id="1.10.10.60">
    <property type="entry name" value="Homeodomain-like"/>
    <property type="match status" value="1"/>
</dbReference>
<dbReference type="InterPro" id="IPR050609">
    <property type="entry name" value="Antp_homeobox_Deformed_sf"/>
</dbReference>
<dbReference type="InterPro" id="IPR001356">
    <property type="entry name" value="HD"/>
</dbReference>
<dbReference type="InterPro" id="IPR020479">
    <property type="entry name" value="HD_metazoa"/>
</dbReference>
<dbReference type="InterPro" id="IPR017995">
    <property type="entry name" value="Homeobox_antennapedia"/>
</dbReference>
<dbReference type="InterPro" id="IPR001827">
    <property type="entry name" value="Homeobox_Antennapedia_CS"/>
</dbReference>
<dbReference type="InterPro" id="IPR017970">
    <property type="entry name" value="Homeobox_CS"/>
</dbReference>
<dbReference type="InterPro" id="IPR009057">
    <property type="entry name" value="Homeodomain-like_sf"/>
</dbReference>
<dbReference type="PANTHER" id="PTHR45771">
    <property type="entry name" value="HOMEOTIC PROTEIN DEFORMED"/>
    <property type="match status" value="1"/>
</dbReference>
<dbReference type="PANTHER" id="PTHR45771:SF6">
    <property type="entry name" value="HOMEOTIC PROTEIN SEX COMBS REDUCED"/>
    <property type="match status" value="1"/>
</dbReference>
<dbReference type="Pfam" id="PF00046">
    <property type="entry name" value="Homeodomain"/>
    <property type="match status" value="1"/>
</dbReference>
<dbReference type="PRINTS" id="PR00025">
    <property type="entry name" value="ANTENNAPEDIA"/>
</dbReference>
<dbReference type="PRINTS" id="PR00024">
    <property type="entry name" value="HOMEOBOX"/>
</dbReference>
<dbReference type="SMART" id="SM00389">
    <property type="entry name" value="HOX"/>
    <property type="match status" value="1"/>
</dbReference>
<dbReference type="SUPFAM" id="SSF46689">
    <property type="entry name" value="Homeodomain-like"/>
    <property type="match status" value="1"/>
</dbReference>
<dbReference type="PROSITE" id="PS00032">
    <property type="entry name" value="ANTENNAPEDIA"/>
    <property type="match status" value="1"/>
</dbReference>
<dbReference type="PROSITE" id="PS00027">
    <property type="entry name" value="HOMEOBOX_1"/>
    <property type="match status" value="1"/>
</dbReference>
<dbReference type="PROSITE" id="PS50071">
    <property type="entry name" value="HOMEOBOX_2"/>
    <property type="match status" value="1"/>
</dbReference>
<evidence type="ECO:0000255" key="1">
    <source>
        <dbReference type="PROSITE-ProRule" id="PRU00108"/>
    </source>
</evidence>
<evidence type="ECO:0000256" key="2">
    <source>
        <dbReference type="SAM" id="MobiDB-lite"/>
    </source>
</evidence>
<evidence type="ECO:0000269" key="3">
    <source>
    </source>
</evidence>
<evidence type="ECO:0000269" key="4">
    <source>
    </source>
</evidence>
<evidence type="ECO:0000269" key="5">
    <source>
    </source>
</evidence>
<evidence type="ECO:0000305" key="6"/>
<evidence type="ECO:0007829" key="7">
    <source>
        <dbReference type="PDB" id="2R5Y"/>
    </source>
</evidence>
<comment type="function">
    <text evidence="4">Sequence-specific transcription factor which is part of a developmental regulatory system that provides cells with specific positional identities on the anterior-posterior axis. Controls the segmental transformation of the first to the second thoracic segment (prothorax to mesothorax) and of the labial palps into maxillary palps. In embryo, required for fusion of labial lobes and development of the T1 denticle belt. In adult, expression in the head is necessary for proper development of the labium. In the first thoracic segment of the adult, required for proper development of the sex comb and to suppress improper prothoracic wing development.</text>
</comment>
<comment type="interaction">
    <interactant intactId="EBI-666569">
        <id>P09077</id>
    </interactant>
    <interactant intactId="EBI-101537">
        <id>P40427</id>
        <label>exd</label>
    </interactant>
    <organismsDiffer>false</organismsDiffer>
    <experiments>3</experiments>
</comment>
<comment type="subcellular location">
    <subcellularLocation>
        <location>Nucleus</location>
    </subcellularLocation>
</comment>
<comment type="tissue specificity">
    <text evidence="3">In embryo, expressed in the labial and anterior prothoracic segments and the extreme posterior of the maxillary segment. In adult, expressed in the maxillary analgen of the eye and antennal imaginal disk and the labial and T1 leg imaginal disks.</text>
</comment>
<comment type="similarity">
    <text evidence="6">Belongs to the Antp homeobox family. Deformed subfamily.</text>
</comment>
<comment type="sequence caution" evidence="6">
    <conflict type="frameshift">
        <sequence resource="EMBL-CDS" id="AAA19240"/>
    </conflict>
</comment>
<comment type="sequence caution" evidence="6">
    <conflict type="frameshift">
        <sequence resource="EMBL-CDS" id="CAA32637"/>
    </conflict>
</comment>
<proteinExistence type="evidence at protein level"/>
<keyword id="KW-0002">3D-structure</keyword>
<keyword id="KW-0217">Developmental protein</keyword>
<keyword id="KW-0238">DNA-binding</keyword>
<keyword id="KW-0371">Homeobox</keyword>
<keyword id="KW-0539">Nucleus</keyword>
<keyword id="KW-0597">Phosphoprotein</keyword>
<keyword id="KW-1185">Reference proteome</keyword>
<sequence>MDPDCFAMSSYQFVNSLASCYPQQMNPQQNHPGAGNSSAGGSGGGAGGSGGVVPSGGTNGGQGSAGAATPGANDYFPAAAAYTPNLYPNTPQAHYANQAAYGGQGNPDMVDYTQLQPQRLLLQQQQQQQQQQHAHAAAAVAAQQQQQLAQQQHPQQQQQQQQANISCKYANDPVTPGGSGGGGVSGSNNNNNSANSNNNNSQSLASPQDLSTRDISPKLSPSSVVESVARSLNKGVLGGSLAAAAAAAGLNNNHSGSGVSGGPGNVNVPMHSPGGGDSDSESDSGNEAGSSQNSGNGKKNPPQIYPWMKRVHLGTSTVNANGETKRQRTSYTRYQTLELEKEFHFNRYLTRRRRIEIAHALCLTERQIKIWFQNRRMKWKKEHKMASMNIVPYHMGPYGHPYHQFDIHPSQFAHLSA</sequence>
<protein>
    <recommendedName>
        <fullName>Homeotic protein Sex combs reduced</fullName>
    </recommendedName>
</protein>